<reference key="1">
    <citation type="journal article" date="2004" name="Mol. Phylogenet. Evol.">
        <title>Phylogeny of Panax using chloroplast trnC-trnD intergenic region and the utility of trnC-trnD in interspecific studies of plants.</title>
        <authorList>
            <person name="Lee C."/>
            <person name="Wen J."/>
        </authorList>
    </citation>
    <scope>NUCLEOTIDE SEQUENCE [GENOMIC DNA]</scope>
</reference>
<keyword id="KW-0150">Chloroplast</keyword>
<keyword id="KW-0472">Membrane</keyword>
<keyword id="KW-0602">Photosynthesis</keyword>
<keyword id="KW-0604">Photosystem II</keyword>
<keyword id="KW-0934">Plastid</keyword>
<keyword id="KW-0674">Reaction center</keyword>
<keyword id="KW-0793">Thylakoid</keyword>
<keyword id="KW-0812">Transmembrane</keyword>
<keyword id="KW-1133">Transmembrane helix</keyword>
<sequence>MEVNILAFIATALFILVPTAFLLIIYVKTESQNKK</sequence>
<comment type="function">
    <text evidence="1">One of the components of the core complex of photosystem II (PSII). PSII is a light-driven water:plastoquinone oxidoreductase that uses light energy to abstract electrons from H(2)O, generating O(2) and a proton gradient subsequently used for ATP formation. It consists of a core antenna complex that captures photons, and an electron transfer chain that converts photonic excitation into a charge separation. This subunit is found at the monomer-monomer interface.</text>
</comment>
<comment type="subunit">
    <text evidence="1">PSII is composed of 1 copy each of membrane proteins PsbA, PsbB, PsbC, PsbD, PsbE, PsbF, PsbH, PsbI, PsbJ, PsbK, PsbL, PsbM, PsbT, PsbX, PsbY, PsbZ, Psb30/Ycf12, at least 3 peripheral proteins of the oxygen-evolving complex and a large number of cofactors. It forms dimeric complexes.</text>
</comment>
<comment type="subcellular location">
    <subcellularLocation>
        <location evidence="1">Plastid</location>
        <location evidence="1">Chloroplast thylakoid membrane</location>
        <topology evidence="1">Single-pass membrane protein</topology>
    </subcellularLocation>
</comment>
<comment type="similarity">
    <text evidence="1">Belongs to the PsbM family.</text>
</comment>
<protein>
    <recommendedName>
        <fullName evidence="1">Photosystem II reaction center protein M</fullName>
        <shortName evidence="1">PSII-M</shortName>
    </recommendedName>
</protein>
<geneLocation type="chloroplast"/>
<dbReference type="EMBL" id="AY275937">
    <property type="protein sequence ID" value="AAP34526.1"/>
    <property type="molecule type" value="Genomic_DNA"/>
</dbReference>
<dbReference type="EMBL" id="AY275938">
    <property type="protein sequence ID" value="AAP34528.1"/>
    <property type="molecule type" value="Genomic_DNA"/>
</dbReference>
<dbReference type="EMBL" id="AY275939">
    <property type="protein sequence ID" value="AAP34530.1"/>
    <property type="molecule type" value="Genomic_DNA"/>
</dbReference>
<dbReference type="RefSeq" id="YP_009155422.1">
    <property type="nucleotide sequence ID" value="NC_027456.1"/>
</dbReference>
<dbReference type="SMR" id="Q7Y7G0"/>
<dbReference type="GeneID" id="25015474"/>
<dbReference type="GO" id="GO:0009535">
    <property type="term" value="C:chloroplast thylakoid membrane"/>
    <property type="evidence" value="ECO:0007669"/>
    <property type="project" value="UniProtKB-SubCell"/>
</dbReference>
<dbReference type="GO" id="GO:0009523">
    <property type="term" value="C:photosystem II"/>
    <property type="evidence" value="ECO:0007669"/>
    <property type="project" value="UniProtKB-KW"/>
</dbReference>
<dbReference type="GO" id="GO:0019684">
    <property type="term" value="P:photosynthesis, light reaction"/>
    <property type="evidence" value="ECO:0007669"/>
    <property type="project" value="InterPro"/>
</dbReference>
<dbReference type="HAMAP" id="MF_00438">
    <property type="entry name" value="PSII_PsbM"/>
    <property type="match status" value="1"/>
</dbReference>
<dbReference type="InterPro" id="IPR007826">
    <property type="entry name" value="PSII_PsbM"/>
</dbReference>
<dbReference type="InterPro" id="IPR037269">
    <property type="entry name" value="PSII_PsbM_sf"/>
</dbReference>
<dbReference type="NCBIfam" id="TIGR03038">
    <property type="entry name" value="PS_II_psbM"/>
    <property type="match status" value="1"/>
</dbReference>
<dbReference type="PANTHER" id="PTHR35774">
    <property type="entry name" value="PHOTOSYSTEM II REACTION CENTER PROTEIN M"/>
    <property type="match status" value="1"/>
</dbReference>
<dbReference type="PANTHER" id="PTHR35774:SF1">
    <property type="entry name" value="PHOTOSYSTEM II REACTION CENTER PROTEIN M"/>
    <property type="match status" value="1"/>
</dbReference>
<dbReference type="Pfam" id="PF05151">
    <property type="entry name" value="PsbM"/>
    <property type="match status" value="1"/>
</dbReference>
<dbReference type="SUPFAM" id="SSF161033">
    <property type="entry name" value="Photosystem II reaction center protein M, PsbM"/>
    <property type="match status" value="1"/>
</dbReference>
<gene>
    <name evidence="1" type="primary">psbM</name>
</gene>
<organism>
    <name type="scientific">Panax quinquefolius</name>
    <name type="common">American ginseng</name>
    <name type="synonym">Aralia quinquefolia</name>
    <dbReference type="NCBI Taxonomy" id="44588"/>
    <lineage>
        <taxon>Eukaryota</taxon>
        <taxon>Viridiplantae</taxon>
        <taxon>Streptophyta</taxon>
        <taxon>Embryophyta</taxon>
        <taxon>Tracheophyta</taxon>
        <taxon>Spermatophyta</taxon>
        <taxon>Magnoliopsida</taxon>
        <taxon>eudicotyledons</taxon>
        <taxon>Gunneridae</taxon>
        <taxon>Pentapetalae</taxon>
        <taxon>asterids</taxon>
        <taxon>campanulids</taxon>
        <taxon>Apiales</taxon>
        <taxon>Araliaceae</taxon>
        <taxon>Panax</taxon>
    </lineage>
</organism>
<feature type="chain" id="PRO_0000217568" description="Photosystem II reaction center protein M">
    <location>
        <begin position="1"/>
        <end position="35"/>
    </location>
</feature>
<feature type="transmembrane region" description="Helical" evidence="1">
    <location>
        <begin position="5"/>
        <end position="25"/>
    </location>
</feature>
<proteinExistence type="inferred from homology"/>
<accession>Q7Y7G0</accession>
<name>PSBM_PANQU</name>
<evidence type="ECO:0000255" key="1">
    <source>
        <dbReference type="HAMAP-Rule" id="MF_00438"/>
    </source>
</evidence>